<dbReference type="EC" id="7.1.1.-" evidence="1"/>
<dbReference type="EMBL" id="AF383826">
    <property type="protein sequence ID" value="AAN61767.1"/>
    <property type="molecule type" value="Genomic_DNA"/>
</dbReference>
<dbReference type="SMR" id="Q8HVN7"/>
<dbReference type="GO" id="GO:0009535">
    <property type="term" value="C:chloroplast thylakoid membrane"/>
    <property type="evidence" value="ECO:0007669"/>
    <property type="project" value="UniProtKB-SubCell"/>
</dbReference>
<dbReference type="GO" id="GO:0051539">
    <property type="term" value="F:4 iron, 4 sulfur cluster binding"/>
    <property type="evidence" value="ECO:0007669"/>
    <property type="project" value="UniProtKB-KW"/>
</dbReference>
<dbReference type="GO" id="GO:0005506">
    <property type="term" value="F:iron ion binding"/>
    <property type="evidence" value="ECO:0007669"/>
    <property type="project" value="UniProtKB-UniRule"/>
</dbReference>
<dbReference type="GO" id="GO:0008137">
    <property type="term" value="F:NADH dehydrogenase (ubiquinone) activity"/>
    <property type="evidence" value="ECO:0007669"/>
    <property type="project" value="InterPro"/>
</dbReference>
<dbReference type="GO" id="GO:0048038">
    <property type="term" value="F:quinone binding"/>
    <property type="evidence" value="ECO:0007669"/>
    <property type="project" value="UniProtKB-KW"/>
</dbReference>
<dbReference type="GO" id="GO:0019684">
    <property type="term" value="P:photosynthesis, light reaction"/>
    <property type="evidence" value="ECO:0007669"/>
    <property type="project" value="UniProtKB-UniRule"/>
</dbReference>
<dbReference type="FunFam" id="3.30.70.3270:FF:000006">
    <property type="entry name" value="NAD(P)H-quinone oxidoreductase subunit I, chloroplastic"/>
    <property type="match status" value="1"/>
</dbReference>
<dbReference type="Gene3D" id="3.30.70.3270">
    <property type="match status" value="1"/>
</dbReference>
<dbReference type="HAMAP" id="MF_01351">
    <property type="entry name" value="NDH1_NuoI"/>
    <property type="match status" value="1"/>
</dbReference>
<dbReference type="InterPro" id="IPR017896">
    <property type="entry name" value="4Fe4S_Fe-S-bd"/>
</dbReference>
<dbReference type="InterPro" id="IPR017900">
    <property type="entry name" value="4Fe4S_Fe_S_CS"/>
</dbReference>
<dbReference type="InterPro" id="IPR010226">
    <property type="entry name" value="NADH_quinone_OxRdtase_chainI"/>
</dbReference>
<dbReference type="InterPro" id="IPR004497">
    <property type="entry name" value="NDHI"/>
</dbReference>
<dbReference type="NCBIfam" id="TIGR00403">
    <property type="entry name" value="ndhI"/>
    <property type="match status" value="1"/>
</dbReference>
<dbReference type="NCBIfam" id="TIGR01971">
    <property type="entry name" value="NuoI"/>
    <property type="match status" value="1"/>
</dbReference>
<dbReference type="NCBIfam" id="NF004537">
    <property type="entry name" value="PRK05888.1-3"/>
    <property type="match status" value="1"/>
</dbReference>
<dbReference type="PANTHER" id="PTHR47275">
    <property type="entry name" value="NAD(P)H-QUINONE OXIDOREDUCTASE SUBUNIT I, CHLOROPLASTIC"/>
    <property type="match status" value="1"/>
</dbReference>
<dbReference type="PANTHER" id="PTHR47275:SF1">
    <property type="entry name" value="NAD(P)H-QUINONE OXIDOREDUCTASE SUBUNIT I, CHLOROPLASTIC"/>
    <property type="match status" value="1"/>
</dbReference>
<dbReference type="Pfam" id="PF00037">
    <property type="entry name" value="Fer4"/>
    <property type="match status" value="2"/>
</dbReference>
<dbReference type="SUPFAM" id="SSF54862">
    <property type="entry name" value="4Fe-4S ferredoxins"/>
    <property type="match status" value="1"/>
</dbReference>
<dbReference type="PROSITE" id="PS00198">
    <property type="entry name" value="4FE4S_FER_1"/>
    <property type="match status" value="2"/>
</dbReference>
<dbReference type="PROSITE" id="PS51379">
    <property type="entry name" value="4FE4S_FER_2"/>
    <property type="match status" value="2"/>
</dbReference>
<keyword id="KW-0004">4Fe-4S</keyword>
<keyword id="KW-0150">Chloroplast</keyword>
<keyword id="KW-0408">Iron</keyword>
<keyword id="KW-0411">Iron-sulfur</keyword>
<keyword id="KW-0472">Membrane</keyword>
<keyword id="KW-0479">Metal-binding</keyword>
<keyword id="KW-0520">NAD</keyword>
<keyword id="KW-0521">NADP</keyword>
<keyword id="KW-0934">Plastid</keyword>
<keyword id="KW-0618">Plastoquinone</keyword>
<keyword id="KW-0874">Quinone</keyword>
<keyword id="KW-0677">Repeat</keyword>
<keyword id="KW-0793">Thylakoid</keyword>
<keyword id="KW-1278">Translocase</keyword>
<organism>
    <name type="scientific">Oxypappus scaber</name>
    <dbReference type="NCBI Taxonomy" id="176555"/>
    <lineage>
        <taxon>Eukaryota</taxon>
        <taxon>Viridiplantae</taxon>
        <taxon>Streptophyta</taxon>
        <taxon>Embryophyta</taxon>
        <taxon>Tracheophyta</taxon>
        <taxon>Spermatophyta</taxon>
        <taxon>Magnoliopsida</taxon>
        <taxon>eudicotyledons</taxon>
        <taxon>Gunneridae</taxon>
        <taxon>Pentapetalae</taxon>
        <taxon>asterids</taxon>
        <taxon>campanulids</taxon>
        <taxon>Asterales</taxon>
        <taxon>Asteraceae</taxon>
        <taxon>Asteroideae</taxon>
        <taxon>Heliantheae alliance</taxon>
        <taxon>Tageteae</taxon>
        <taxon>Oxypappus</taxon>
    </lineage>
</organism>
<protein>
    <recommendedName>
        <fullName evidence="1">NAD(P)H-quinone oxidoreductase subunit I, chloroplastic</fullName>
        <ecNumber evidence="1">7.1.1.-</ecNumber>
    </recommendedName>
    <alternativeName>
        <fullName evidence="1">NAD(P)H dehydrogenase subunit I</fullName>
        <shortName evidence="1">NDH subunit I</shortName>
    </alternativeName>
    <alternativeName>
        <fullName evidence="1">NADH-plastoquinone oxidoreductase subunit I</fullName>
    </alternativeName>
</protein>
<gene>
    <name evidence="1" type="primary">ndhI</name>
</gene>
<evidence type="ECO:0000255" key="1">
    <source>
        <dbReference type="HAMAP-Rule" id="MF_01351"/>
    </source>
</evidence>
<accession>Q8HVN7</accession>
<reference key="1">
    <citation type="submission" date="2003-01" db="EMBL/GenBank/DDBJ databases">
        <title>Chloroplast DNA phylogeny of tribe Heliantheae (Asteraceae).</title>
        <authorList>
            <person name="Panero J.L."/>
            <person name="Baldwin B.G."/>
            <person name="Schilling E.E."/>
            <person name="Clevinger J.A."/>
        </authorList>
    </citation>
    <scope>NUCLEOTIDE SEQUENCE [GENOMIC DNA]</scope>
</reference>
<proteinExistence type="inferred from homology"/>
<feature type="chain" id="PRO_0000250825" description="NAD(P)H-quinone oxidoreductase subunit I, chloroplastic">
    <location>
        <begin position="1"/>
        <end position="166"/>
    </location>
</feature>
<feature type="domain" description="4Fe-4S ferredoxin-type 1" evidence="1">
    <location>
        <begin position="55"/>
        <end position="84"/>
    </location>
</feature>
<feature type="domain" description="4Fe-4S ferredoxin-type 2" evidence="1">
    <location>
        <begin position="95"/>
        <end position="124"/>
    </location>
</feature>
<feature type="binding site" evidence="1">
    <location>
        <position position="64"/>
    </location>
    <ligand>
        <name>[4Fe-4S] cluster</name>
        <dbReference type="ChEBI" id="CHEBI:49883"/>
        <label>1</label>
    </ligand>
</feature>
<feature type="binding site" evidence="1">
    <location>
        <position position="67"/>
    </location>
    <ligand>
        <name>[4Fe-4S] cluster</name>
        <dbReference type="ChEBI" id="CHEBI:49883"/>
        <label>1</label>
    </ligand>
</feature>
<feature type="binding site" evidence="1">
    <location>
        <position position="70"/>
    </location>
    <ligand>
        <name>[4Fe-4S] cluster</name>
        <dbReference type="ChEBI" id="CHEBI:49883"/>
        <label>1</label>
    </ligand>
</feature>
<feature type="binding site" evidence="1">
    <location>
        <position position="74"/>
    </location>
    <ligand>
        <name>[4Fe-4S] cluster</name>
        <dbReference type="ChEBI" id="CHEBI:49883"/>
        <label>2</label>
    </ligand>
</feature>
<feature type="binding site" evidence="1">
    <location>
        <position position="104"/>
    </location>
    <ligand>
        <name>[4Fe-4S] cluster</name>
        <dbReference type="ChEBI" id="CHEBI:49883"/>
        <label>2</label>
    </ligand>
</feature>
<feature type="binding site" evidence="1">
    <location>
        <position position="107"/>
    </location>
    <ligand>
        <name>[4Fe-4S] cluster</name>
        <dbReference type="ChEBI" id="CHEBI:49883"/>
        <label>2</label>
    </ligand>
</feature>
<feature type="binding site" evidence="1">
    <location>
        <position position="110"/>
    </location>
    <ligand>
        <name>[4Fe-4S] cluster</name>
        <dbReference type="ChEBI" id="CHEBI:49883"/>
        <label>2</label>
    </ligand>
</feature>
<feature type="binding site" evidence="1">
    <location>
        <position position="114"/>
    </location>
    <ligand>
        <name>[4Fe-4S] cluster</name>
        <dbReference type="ChEBI" id="CHEBI:49883"/>
        <label>1</label>
    </ligand>
</feature>
<sequence length="166" mass="19489">MFPMVTEFMNYGQQTIRAARYIGQGFMITLSHANRLPVTIQYPYEKLITSERFRGRIHFEFDKCIACEVCVRVCPIDLPVVDWKLETDIRKKRLLNYSIDFGICIFCGNCVEYCPTNCLSMTEEYELSTYDRHELNYNQIALGRLPMSIIDDYTIRTILNLPEIKT</sequence>
<geneLocation type="chloroplast"/>
<comment type="function">
    <text evidence="1">NDH shuttles electrons from NAD(P)H:plastoquinone, via FMN and iron-sulfur (Fe-S) centers, to quinones in the photosynthetic chain and possibly in a chloroplast respiratory chain. The immediate electron acceptor for the enzyme in this species is believed to be plastoquinone. Couples the redox reaction to proton translocation, and thus conserves the redox energy in a proton gradient.</text>
</comment>
<comment type="catalytic activity">
    <reaction evidence="1">
        <text>a plastoquinone + NADH + (n+1) H(+)(in) = a plastoquinol + NAD(+) + n H(+)(out)</text>
        <dbReference type="Rhea" id="RHEA:42608"/>
        <dbReference type="Rhea" id="RHEA-COMP:9561"/>
        <dbReference type="Rhea" id="RHEA-COMP:9562"/>
        <dbReference type="ChEBI" id="CHEBI:15378"/>
        <dbReference type="ChEBI" id="CHEBI:17757"/>
        <dbReference type="ChEBI" id="CHEBI:57540"/>
        <dbReference type="ChEBI" id="CHEBI:57945"/>
        <dbReference type="ChEBI" id="CHEBI:62192"/>
    </reaction>
</comment>
<comment type="catalytic activity">
    <reaction evidence="1">
        <text>a plastoquinone + NADPH + (n+1) H(+)(in) = a plastoquinol + NADP(+) + n H(+)(out)</text>
        <dbReference type="Rhea" id="RHEA:42612"/>
        <dbReference type="Rhea" id="RHEA-COMP:9561"/>
        <dbReference type="Rhea" id="RHEA-COMP:9562"/>
        <dbReference type="ChEBI" id="CHEBI:15378"/>
        <dbReference type="ChEBI" id="CHEBI:17757"/>
        <dbReference type="ChEBI" id="CHEBI:57783"/>
        <dbReference type="ChEBI" id="CHEBI:58349"/>
        <dbReference type="ChEBI" id="CHEBI:62192"/>
    </reaction>
</comment>
<comment type="cofactor">
    <cofactor evidence="1">
        <name>[4Fe-4S] cluster</name>
        <dbReference type="ChEBI" id="CHEBI:49883"/>
    </cofactor>
    <text evidence="1">Binds 2 [4Fe-4S] clusters per subunit.</text>
</comment>
<comment type="subunit">
    <text evidence="1">NDH is composed of at least 16 different subunits, 5 of which are encoded in the nucleus.</text>
</comment>
<comment type="subcellular location">
    <subcellularLocation>
        <location evidence="1">Plastid</location>
        <location evidence="1">Chloroplast thylakoid membrane</location>
        <topology evidence="1">Peripheral membrane protein</topology>
    </subcellularLocation>
</comment>
<comment type="similarity">
    <text evidence="1">Belongs to the complex I 23 kDa subunit family.</text>
</comment>
<name>NDHI_OXYSB</name>